<gene>
    <name evidence="1" type="primary">folE2-2</name>
    <name type="ordered locus">Daro_3062</name>
</gene>
<sequence>MSTPTSNIPDVQNSADTRHIAINKVGIKSIRHPIKVQDKSAGIQHTIAMFNMYVGLPHNFKGTHMSRFVEILNSHEREISVENFPTMLRDMVVKLEAETGHIEMNFPYFINKTAPVSGVQSLMDYDVTFIGDICHGEIATSVKVVVPVTSLCPCSKKISEYGAHNQRSHVTVTAKTNDFMWIEEIVQLVEQEASCELFGLLKRPDEKYVTERAYDNPKFVEDMVRDVAARLNAEARVDAYVVESENFESIHNHSAYALIENDKKNPLAHA</sequence>
<accession>Q47BI9</accession>
<keyword id="KW-0378">Hydrolase</keyword>
<reference key="1">
    <citation type="journal article" date="2009" name="BMC Genomics">
        <title>Metabolic analysis of the soil microbe Dechloromonas aromatica str. RCB: indications of a surprisingly complex life-style and cryptic anaerobic pathways for aromatic degradation.</title>
        <authorList>
            <person name="Salinero K.K."/>
            <person name="Keller K."/>
            <person name="Feil W.S."/>
            <person name="Feil H."/>
            <person name="Trong S."/>
            <person name="Di Bartolo G."/>
            <person name="Lapidus A."/>
        </authorList>
    </citation>
    <scope>NUCLEOTIDE SEQUENCE [LARGE SCALE GENOMIC DNA]</scope>
    <source>
        <strain>RCB</strain>
    </source>
</reference>
<dbReference type="EC" id="3.5.4.16" evidence="1"/>
<dbReference type="EMBL" id="CP000089">
    <property type="protein sequence ID" value="AAZ47792.1"/>
    <property type="molecule type" value="Genomic_DNA"/>
</dbReference>
<dbReference type="SMR" id="Q47BI9"/>
<dbReference type="STRING" id="159087.Daro_3062"/>
<dbReference type="KEGG" id="dar:Daro_3062"/>
<dbReference type="eggNOG" id="COG1469">
    <property type="taxonomic scope" value="Bacteria"/>
</dbReference>
<dbReference type="HOGENOM" id="CLU_062816_1_1_4"/>
<dbReference type="OrthoDB" id="9774824at2"/>
<dbReference type="UniPathway" id="UPA00848">
    <property type="reaction ID" value="UER00151"/>
</dbReference>
<dbReference type="GO" id="GO:0003934">
    <property type="term" value="F:GTP cyclohydrolase I activity"/>
    <property type="evidence" value="ECO:0007669"/>
    <property type="project" value="UniProtKB-UniRule"/>
</dbReference>
<dbReference type="GO" id="GO:0046654">
    <property type="term" value="P:tetrahydrofolate biosynthetic process"/>
    <property type="evidence" value="ECO:0007669"/>
    <property type="project" value="UniProtKB-UniRule"/>
</dbReference>
<dbReference type="Gene3D" id="3.10.270.10">
    <property type="entry name" value="Urate Oxidase"/>
    <property type="match status" value="1"/>
</dbReference>
<dbReference type="HAMAP" id="MF_01527_B">
    <property type="entry name" value="GTP_cyclohydrol_B"/>
    <property type="match status" value="1"/>
</dbReference>
<dbReference type="InterPro" id="IPR022838">
    <property type="entry name" value="GTP_cyclohydrolase_FolE2"/>
</dbReference>
<dbReference type="InterPro" id="IPR003801">
    <property type="entry name" value="GTP_cyclohydrolase_FolE2/MptA"/>
</dbReference>
<dbReference type="NCBIfam" id="NF010200">
    <property type="entry name" value="PRK13674.1-1"/>
    <property type="match status" value="1"/>
</dbReference>
<dbReference type="PANTHER" id="PTHR36445">
    <property type="entry name" value="GTP CYCLOHYDROLASE MPTA"/>
    <property type="match status" value="1"/>
</dbReference>
<dbReference type="PANTHER" id="PTHR36445:SF1">
    <property type="entry name" value="GTP CYCLOHYDROLASE MPTA"/>
    <property type="match status" value="1"/>
</dbReference>
<dbReference type="Pfam" id="PF02649">
    <property type="entry name" value="GCHY-1"/>
    <property type="match status" value="1"/>
</dbReference>
<name>GCH42_DECAR</name>
<feature type="chain" id="PRO_0000289487" description="GTP cyclohydrolase FolE2 2">
    <location>
        <begin position="1"/>
        <end position="270"/>
    </location>
</feature>
<feature type="site" description="May be catalytically important" evidence="1">
    <location>
        <position position="152"/>
    </location>
</feature>
<organism>
    <name type="scientific">Dechloromonas aromatica (strain RCB)</name>
    <dbReference type="NCBI Taxonomy" id="159087"/>
    <lineage>
        <taxon>Bacteria</taxon>
        <taxon>Pseudomonadati</taxon>
        <taxon>Pseudomonadota</taxon>
        <taxon>Betaproteobacteria</taxon>
        <taxon>Rhodocyclales</taxon>
        <taxon>Azonexaceae</taxon>
        <taxon>Dechloromonas</taxon>
    </lineage>
</organism>
<evidence type="ECO:0000255" key="1">
    <source>
        <dbReference type="HAMAP-Rule" id="MF_01527"/>
    </source>
</evidence>
<comment type="function">
    <text evidence="1">Converts GTP to 7,8-dihydroneopterin triphosphate.</text>
</comment>
<comment type="catalytic activity">
    <reaction evidence="1">
        <text>GTP + H2O = 7,8-dihydroneopterin 3'-triphosphate + formate + H(+)</text>
        <dbReference type="Rhea" id="RHEA:17473"/>
        <dbReference type="ChEBI" id="CHEBI:15377"/>
        <dbReference type="ChEBI" id="CHEBI:15378"/>
        <dbReference type="ChEBI" id="CHEBI:15740"/>
        <dbReference type="ChEBI" id="CHEBI:37565"/>
        <dbReference type="ChEBI" id="CHEBI:58462"/>
        <dbReference type="EC" id="3.5.4.16"/>
    </reaction>
</comment>
<comment type="pathway">
    <text evidence="1">Cofactor biosynthesis; 7,8-dihydroneopterin triphosphate biosynthesis; 7,8-dihydroneopterin triphosphate from GTP: step 1/1.</text>
</comment>
<comment type="similarity">
    <text evidence="1">Belongs to the GTP cyclohydrolase IV family.</text>
</comment>
<protein>
    <recommendedName>
        <fullName evidence="1">GTP cyclohydrolase FolE2 2</fullName>
        <ecNumber evidence="1">3.5.4.16</ecNumber>
    </recommendedName>
</protein>
<proteinExistence type="inferred from homology"/>